<reference key="1">
    <citation type="journal article" date="2017" name="Mol. Cell. Biol.">
        <title>SETD4 regulates cell quiescence and catalyzes the trimethylation of H4K20 during diapause formation in Artemia.</title>
        <authorList>
            <person name="Dai L."/>
            <person name="Ye S."/>
            <person name="Li H.W."/>
            <person name="Chen D.F."/>
            <person name="Wang H.L."/>
            <person name="Jia S.N."/>
            <person name="Lin C."/>
            <person name="Yang J.S."/>
            <person name="Yang F."/>
            <person name="Nagasawa H."/>
            <person name="Yang W.J."/>
        </authorList>
    </citation>
    <scope>NUCLEOTIDE SEQUENCE [MRNA]</scope>
    <scope>FUNCTION</scope>
    <scope>CATALYTIC ACTIVITY</scope>
    <scope>SUBCELLULAR LOCATION</scope>
    <scope>DEVELOPMENTAL STAGE</scope>
</reference>
<accession>A0A140C435</accession>
<keyword id="KW-0156">Chromatin regulator</keyword>
<keyword id="KW-0489">Methyltransferase</keyword>
<keyword id="KW-0539">Nucleus</keyword>
<keyword id="KW-0949">S-adenosyl-L-methionine</keyword>
<keyword id="KW-0808">Transferase</keyword>
<protein>
    <recommendedName>
        <fullName evidence="4">SET domain-containing protein 4</fullName>
        <shortName evidence="3">Ar-SETD4</shortName>
        <ecNumber evidence="2">2.1.1.-</ecNumber>
        <ecNumber evidence="1 2">2.1.1.360</ecNumber>
    </recommendedName>
</protein>
<organism>
    <name type="scientific">Artemia parthenogenetica</name>
    <name type="common">Brine shrimp</name>
    <dbReference type="NCBI Taxonomy" id="6663"/>
    <lineage>
        <taxon>Eukaryota</taxon>
        <taxon>Metazoa</taxon>
        <taxon>Ecdysozoa</taxon>
        <taxon>Arthropoda</taxon>
        <taxon>Crustacea</taxon>
        <taxon>Branchiopoda</taxon>
        <taxon>Anostraca</taxon>
        <taxon>Artemiidae</taxon>
        <taxon>Artemia</taxon>
    </lineage>
</organism>
<dbReference type="EC" id="2.1.1.-" evidence="2"/>
<dbReference type="EC" id="2.1.1.360" evidence="1 2"/>
<dbReference type="EMBL" id="KP749757">
    <property type="protein sequence ID" value="ALU84859.1"/>
    <property type="molecule type" value="mRNA"/>
</dbReference>
<dbReference type="SMR" id="A0A140C435"/>
<dbReference type="GO" id="GO:0005634">
    <property type="term" value="C:nucleus"/>
    <property type="evidence" value="ECO:0007669"/>
    <property type="project" value="UniProtKB-SubCell"/>
</dbReference>
<dbReference type="GO" id="GO:0140956">
    <property type="term" value="F:histone H3K79 trimethyltransferase activity"/>
    <property type="evidence" value="ECO:0007669"/>
    <property type="project" value="UniProtKB-EC"/>
</dbReference>
<dbReference type="GO" id="GO:0140944">
    <property type="term" value="F:histone H4K20 monomethyltransferase activity"/>
    <property type="evidence" value="ECO:0007669"/>
    <property type="project" value="RHEA"/>
</dbReference>
<dbReference type="GO" id="GO:0140943">
    <property type="term" value="F:histone H4K20 trimethyltransferase activity"/>
    <property type="evidence" value="ECO:0000314"/>
    <property type="project" value="UniProtKB"/>
</dbReference>
<dbReference type="GO" id="GO:0140941">
    <property type="term" value="F:histone H4K20me methyltransferase activity"/>
    <property type="evidence" value="ECO:0007669"/>
    <property type="project" value="RHEA"/>
</dbReference>
<dbReference type="GO" id="GO:0055115">
    <property type="term" value="P:entry into diapause"/>
    <property type="evidence" value="ECO:0000314"/>
    <property type="project" value="UniProtKB"/>
</dbReference>
<dbReference type="GO" id="GO:0032259">
    <property type="term" value="P:methylation"/>
    <property type="evidence" value="ECO:0007669"/>
    <property type="project" value="UniProtKB-KW"/>
</dbReference>
<dbReference type="CDD" id="cd19177">
    <property type="entry name" value="SET_SETD4"/>
    <property type="match status" value="1"/>
</dbReference>
<dbReference type="FunFam" id="3.90.1410.10:FF:000050">
    <property type="entry name" value="SET domain-containing protein 4"/>
    <property type="match status" value="1"/>
</dbReference>
<dbReference type="Gene3D" id="3.90.1410.10">
    <property type="entry name" value="set domain protein methyltransferase, domain 1"/>
    <property type="match status" value="1"/>
</dbReference>
<dbReference type="InterPro" id="IPR001214">
    <property type="entry name" value="SET_dom"/>
</dbReference>
<dbReference type="InterPro" id="IPR046341">
    <property type="entry name" value="SET_dom_sf"/>
</dbReference>
<dbReference type="InterPro" id="IPR050600">
    <property type="entry name" value="SETD3_SETD6_MTase"/>
</dbReference>
<dbReference type="InterPro" id="IPR044429">
    <property type="entry name" value="SETD4_SET"/>
</dbReference>
<dbReference type="PANTHER" id="PTHR13271:SF151">
    <property type="entry name" value="SET DOMAIN-CONTAINING PROTEIN 4"/>
    <property type="match status" value="1"/>
</dbReference>
<dbReference type="PANTHER" id="PTHR13271">
    <property type="entry name" value="UNCHARACTERIZED PUTATIVE METHYLTRANSFERASE"/>
    <property type="match status" value="1"/>
</dbReference>
<dbReference type="Pfam" id="PF00856">
    <property type="entry name" value="SET"/>
    <property type="match status" value="1"/>
</dbReference>
<dbReference type="SUPFAM" id="SSF82199">
    <property type="entry name" value="SET domain"/>
    <property type="match status" value="1"/>
</dbReference>
<dbReference type="PROSITE" id="PS50280">
    <property type="entry name" value="SET"/>
    <property type="match status" value="1"/>
</dbReference>
<comment type="function">
    <text evidence="2">Protein-lysine N-methyltransferase involved in the regulation of cell quiescence by catalyzing the trimethylation of 'Lys-20' of histone H4 and 'Lys-79' of histone H3 (H4K20me3 and H3K79me3, respectively) during diapause formation, a state of obligate dormancy.</text>
</comment>
<comment type="catalytic activity">
    <reaction evidence="2">
        <text>L-lysyl(79)-[histone H3] + 3 S-adenosyl-L-methionine = N(6),N(6),N(6)-trimethyl-L-lysyl(79)-[histone H3] + 3 S-adenosyl-L-homocysteine + 3 H(+)</text>
        <dbReference type="Rhea" id="RHEA:60328"/>
        <dbReference type="Rhea" id="RHEA-COMP:15549"/>
        <dbReference type="Rhea" id="RHEA-COMP:15552"/>
        <dbReference type="ChEBI" id="CHEBI:15378"/>
        <dbReference type="ChEBI" id="CHEBI:29969"/>
        <dbReference type="ChEBI" id="CHEBI:57856"/>
        <dbReference type="ChEBI" id="CHEBI:59789"/>
        <dbReference type="ChEBI" id="CHEBI:61961"/>
        <dbReference type="EC" id="2.1.1.360"/>
    </reaction>
</comment>
<comment type="catalytic activity">
    <reaction evidence="2">
        <text>L-lysyl(20)-[histone H4] + S-adenosyl-L-methionine = N(6)-methyl-L-lysyl(20)-[histone H4] + S-adenosyl-L-homocysteine + H(+)</text>
        <dbReference type="Rhea" id="RHEA:60344"/>
        <dbReference type="Rhea" id="RHEA-COMP:15554"/>
        <dbReference type="Rhea" id="RHEA-COMP:15555"/>
        <dbReference type="ChEBI" id="CHEBI:15378"/>
        <dbReference type="ChEBI" id="CHEBI:29969"/>
        <dbReference type="ChEBI" id="CHEBI:57856"/>
        <dbReference type="ChEBI" id="CHEBI:59789"/>
        <dbReference type="ChEBI" id="CHEBI:61929"/>
    </reaction>
</comment>
<comment type="catalytic activity">
    <reaction evidence="2">
        <text>N(6)-methyl-L-lysyl(20)-[histone H4] + S-adenosyl-L-methionine = N(6),N(6)-dimethyl-L-lysyl(20)-[histone H4] + S-adenosyl-L-homocysteine + H(+)</text>
        <dbReference type="Rhea" id="RHEA:60348"/>
        <dbReference type="Rhea" id="RHEA-COMP:15555"/>
        <dbReference type="Rhea" id="RHEA-COMP:15556"/>
        <dbReference type="ChEBI" id="CHEBI:15378"/>
        <dbReference type="ChEBI" id="CHEBI:57856"/>
        <dbReference type="ChEBI" id="CHEBI:59789"/>
        <dbReference type="ChEBI" id="CHEBI:61929"/>
        <dbReference type="ChEBI" id="CHEBI:61976"/>
    </reaction>
</comment>
<comment type="catalytic activity">
    <reaction evidence="2">
        <text>N(6),N(6)-dimethyl-L-lysyl(20)-[histone H4] + S-adenosyl-L-methionine = N(6),N(6),N(6)-trimethyl-L-lysyl(20)-[histone H4] + S-adenosyl-L-homocysteine + H(+)</text>
        <dbReference type="Rhea" id="RHEA:61992"/>
        <dbReference type="Rhea" id="RHEA-COMP:15556"/>
        <dbReference type="Rhea" id="RHEA-COMP:15998"/>
        <dbReference type="ChEBI" id="CHEBI:15378"/>
        <dbReference type="ChEBI" id="CHEBI:57856"/>
        <dbReference type="ChEBI" id="CHEBI:59789"/>
        <dbReference type="ChEBI" id="CHEBI:61961"/>
        <dbReference type="ChEBI" id="CHEBI:61976"/>
    </reaction>
</comment>
<comment type="subcellular location">
    <subcellularLocation>
        <location evidence="5">Nucleus</location>
    </subcellularLocation>
</comment>
<comment type="developmental stage">
    <text evidence="2">Highly expressed in diapause embryos, in which cells were in a quiescent state (at protein level).</text>
</comment>
<comment type="similarity">
    <text evidence="1 4">Belongs to the class V-like SAM-binding methyltransferase superfamily. SETD4 family.</text>
</comment>
<sequence length="397" mass="45566">MVDRIDPLDITNIKDLSTWMKTKNWRNIAKLEPCRFKESGRGMRTRKGLKAGQLLVQIPRLLLMTAGDFRTSKEWSWIVDKNLSCHDALVLYLLVEKNKRDSSFFHAYIKTLPEVFSMPTDLRSEMTHMLPNFIAMKLQDKIKSLQDSFKNVARGYKSICIKELGFSDFKWAYYVVNTRAVHITGSSGKFNADSSDCMALAPFLDLLNHTHDTSSISGFNPYTNCYEIETLSKTPKCSEVFINYGPHDNLSLFVEYGFMIPRNPNNFVPFEMTDFISACNEYNVKLSNLCLQTINLHNLMKNLGCFADGPSWSVKVLLKVLSCDWSSLMRIEDIIYRDFENHGLTEKTLLNCILEKKKEELQNSLSTIAKDKNCQIANCIVSFLEECLSIIEFSYAN</sequence>
<evidence type="ECO:0000255" key="1">
    <source>
        <dbReference type="PROSITE-ProRule" id="PRU00190"/>
    </source>
</evidence>
<evidence type="ECO:0000269" key="2">
    <source>
    </source>
</evidence>
<evidence type="ECO:0000303" key="3">
    <source>
    </source>
</evidence>
<evidence type="ECO:0000305" key="4"/>
<evidence type="ECO:0000305" key="5">
    <source>
    </source>
</evidence>
<name>SETD4_ARTPA</name>
<proteinExistence type="evidence at protein level"/>
<gene>
    <name evidence="3" type="primary">SETD4</name>
</gene>
<feature type="chain" id="PRO_0000447623" description="SET domain-containing protein 4">
    <location>
        <begin position="1"/>
        <end position="397"/>
    </location>
</feature>
<feature type="domain" description="SET" evidence="1">
    <location>
        <begin position="29"/>
        <end position="245"/>
    </location>
</feature>
<feature type="binding site" evidence="1">
    <location>
        <position position="244"/>
    </location>
    <ligand>
        <name>S-adenosyl-L-methionine</name>
        <dbReference type="ChEBI" id="CHEBI:59789"/>
    </ligand>
</feature>